<organism>
    <name type="scientific">Pseudomonas aeruginosa (strain ATCC 15692 / DSM 22644 / CIP 104116 / JCM 14847 / LMG 12228 / 1C / PRS 101 / PAO1)</name>
    <dbReference type="NCBI Taxonomy" id="208964"/>
    <lineage>
        <taxon>Bacteria</taxon>
        <taxon>Pseudomonadati</taxon>
        <taxon>Pseudomonadota</taxon>
        <taxon>Gammaproteobacteria</taxon>
        <taxon>Pseudomonadales</taxon>
        <taxon>Pseudomonadaceae</taxon>
        <taxon>Pseudomonas</taxon>
    </lineage>
</organism>
<feature type="chain" id="PRO_0000245727" description="NADH-quinone oxidoreductase subunit I">
    <location>
        <begin position="1"/>
        <end position="182"/>
    </location>
</feature>
<feature type="domain" description="4Fe-4S ferredoxin-type 1" evidence="1">
    <location>
        <begin position="52"/>
        <end position="82"/>
    </location>
</feature>
<feature type="domain" description="4Fe-4S ferredoxin-type 2" evidence="1">
    <location>
        <begin position="92"/>
        <end position="121"/>
    </location>
</feature>
<feature type="binding site" evidence="1">
    <location>
        <position position="62"/>
    </location>
    <ligand>
        <name>[4Fe-4S] cluster</name>
        <dbReference type="ChEBI" id="CHEBI:49883"/>
        <label>1</label>
    </ligand>
</feature>
<feature type="binding site" evidence="1">
    <location>
        <position position="65"/>
    </location>
    <ligand>
        <name>[4Fe-4S] cluster</name>
        <dbReference type="ChEBI" id="CHEBI:49883"/>
        <label>1</label>
    </ligand>
</feature>
<feature type="binding site" evidence="1">
    <location>
        <position position="68"/>
    </location>
    <ligand>
        <name>[4Fe-4S] cluster</name>
        <dbReference type="ChEBI" id="CHEBI:49883"/>
        <label>1</label>
    </ligand>
</feature>
<feature type="binding site" evidence="1">
    <location>
        <position position="72"/>
    </location>
    <ligand>
        <name>[4Fe-4S] cluster</name>
        <dbReference type="ChEBI" id="CHEBI:49883"/>
        <label>2</label>
    </ligand>
</feature>
<feature type="binding site" evidence="1">
    <location>
        <position position="101"/>
    </location>
    <ligand>
        <name>[4Fe-4S] cluster</name>
        <dbReference type="ChEBI" id="CHEBI:49883"/>
        <label>2</label>
    </ligand>
</feature>
<feature type="binding site" evidence="1">
    <location>
        <position position="104"/>
    </location>
    <ligand>
        <name>[4Fe-4S] cluster</name>
        <dbReference type="ChEBI" id="CHEBI:49883"/>
        <label>2</label>
    </ligand>
</feature>
<feature type="binding site" evidence="1">
    <location>
        <position position="107"/>
    </location>
    <ligand>
        <name>[4Fe-4S] cluster</name>
        <dbReference type="ChEBI" id="CHEBI:49883"/>
        <label>2</label>
    </ligand>
</feature>
<feature type="binding site" evidence="1">
    <location>
        <position position="111"/>
    </location>
    <ligand>
        <name>[4Fe-4S] cluster</name>
        <dbReference type="ChEBI" id="CHEBI:49883"/>
        <label>1</label>
    </ligand>
</feature>
<protein>
    <recommendedName>
        <fullName evidence="1">NADH-quinone oxidoreductase subunit I</fullName>
        <ecNumber evidence="1">7.1.1.-</ecNumber>
    </recommendedName>
    <alternativeName>
        <fullName evidence="1">NADH dehydrogenase I subunit I</fullName>
    </alternativeName>
    <alternativeName>
        <fullName evidence="1">NDH-1 subunit I</fullName>
    </alternativeName>
</protein>
<gene>
    <name evidence="1" type="primary">nuoI</name>
    <name type="ordered locus">PA2644</name>
</gene>
<keyword id="KW-0004">4Fe-4S</keyword>
<keyword id="KW-0997">Cell inner membrane</keyword>
<keyword id="KW-1003">Cell membrane</keyword>
<keyword id="KW-0408">Iron</keyword>
<keyword id="KW-0411">Iron-sulfur</keyword>
<keyword id="KW-0472">Membrane</keyword>
<keyword id="KW-0479">Metal-binding</keyword>
<keyword id="KW-0520">NAD</keyword>
<keyword id="KW-0874">Quinone</keyword>
<keyword id="KW-1185">Reference proteome</keyword>
<keyword id="KW-0677">Repeat</keyword>
<keyword id="KW-1278">Translocase</keyword>
<keyword id="KW-0830">Ubiquinone</keyword>
<accession>Q9I0J4</accession>
<dbReference type="EC" id="7.1.1.-" evidence="1"/>
<dbReference type="EMBL" id="AE004091">
    <property type="protein sequence ID" value="AAG06032.1"/>
    <property type="molecule type" value="Genomic_DNA"/>
</dbReference>
<dbReference type="PIR" id="A83315">
    <property type="entry name" value="A83315"/>
</dbReference>
<dbReference type="RefSeq" id="NP_251334.1">
    <property type="nucleotide sequence ID" value="NC_002516.2"/>
</dbReference>
<dbReference type="RefSeq" id="WP_003090467.1">
    <property type="nucleotide sequence ID" value="NZ_QZGE01000008.1"/>
</dbReference>
<dbReference type="SMR" id="Q9I0J4"/>
<dbReference type="FunCoup" id="Q9I0J4">
    <property type="interactions" value="540"/>
</dbReference>
<dbReference type="STRING" id="208964.PA2644"/>
<dbReference type="PaxDb" id="208964-PA2644"/>
<dbReference type="DNASU" id="882353"/>
<dbReference type="GeneID" id="77220819"/>
<dbReference type="GeneID" id="882353"/>
<dbReference type="KEGG" id="pae:PA2644"/>
<dbReference type="PATRIC" id="fig|208964.12.peg.2767"/>
<dbReference type="PseudoCAP" id="PA2644"/>
<dbReference type="HOGENOM" id="CLU_067218_4_3_6"/>
<dbReference type="InParanoid" id="Q9I0J4"/>
<dbReference type="OrthoDB" id="9808559at2"/>
<dbReference type="PhylomeDB" id="Q9I0J4"/>
<dbReference type="BioCyc" id="PAER208964:G1FZ6-2684-MONOMER"/>
<dbReference type="PHI-base" id="PHI:8937"/>
<dbReference type="Proteomes" id="UP000002438">
    <property type="component" value="Chromosome"/>
</dbReference>
<dbReference type="GO" id="GO:0005886">
    <property type="term" value="C:plasma membrane"/>
    <property type="evidence" value="ECO:0007669"/>
    <property type="project" value="UniProtKB-SubCell"/>
</dbReference>
<dbReference type="GO" id="GO:0045271">
    <property type="term" value="C:respiratory chain complex I"/>
    <property type="evidence" value="ECO:0000318"/>
    <property type="project" value="GO_Central"/>
</dbReference>
<dbReference type="GO" id="GO:0051539">
    <property type="term" value="F:4 iron, 4 sulfur cluster binding"/>
    <property type="evidence" value="ECO:0007669"/>
    <property type="project" value="UniProtKB-KW"/>
</dbReference>
<dbReference type="GO" id="GO:0005506">
    <property type="term" value="F:iron ion binding"/>
    <property type="evidence" value="ECO:0007669"/>
    <property type="project" value="UniProtKB-UniRule"/>
</dbReference>
<dbReference type="GO" id="GO:0050136">
    <property type="term" value="F:NADH:ubiquinone reductase (non-electrogenic) activity"/>
    <property type="evidence" value="ECO:0007669"/>
    <property type="project" value="UniProtKB-UniRule"/>
</dbReference>
<dbReference type="GO" id="GO:0048038">
    <property type="term" value="F:quinone binding"/>
    <property type="evidence" value="ECO:0007669"/>
    <property type="project" value="UniProtKB-KW"/>
</dbReference>
<dbReference type="GO" id="GO:0009060">
    <property type="term" value="P:aerobic respiration"/>
    <property type="evidence" value="ECO:0000318"/>
    <property type="project" value="GO_Central"/>
</dbReference>
<dbReference type="FunFam" id="3.30.70.3270:FF:000002">
    <property type="entry name" value="NADH-quinone oxidoreductase subunit I"/>
    <property type="match status" value="1"/>
</dbReference>
<dbReference type="Gene3D" id="3.30.70.3270">
    <property type="match status" value="1"/>
</dbReference>
<dbReference type="HAMAP" id="MF_01351">
    <property type="entry name" value="NDH1_NuoI"/>
    <property type="match status" value="1"/>
</dbReference>
<dbReference type="InterPro" id="IPR017896">
    <property type="entry name" value="4Fe4S_Fe-S-bd"/>
</dbReference>
<dbReference type="InterPro" id="IPR017900">
    <property type="entry name" value="4Fe4S_Fe_S_CS"/>
</dbReference>
<dbReference type="InterPro" id="IPR010226">
    <property type="entry name" value="NADH_quinone_OxRdtase_chainI"/>
</dbReference>
<dbReference type="NCBIfam" id="TIGR01971">
    <property type="entry name" value="NuoI"/>
    <property type="match status" value="1"/>
</dbReference>
<dbReference type="NCBIfam" id="NF004536">
    <property type="entry name" value="PRK05888.1-1"/>
    <property type="match status" value="1"/>
</dbReference>
<dbReference type="PANTHER" id="PTHR10849:SF20">
    <property type="entry name" value="NADH DEHYDROGENASE [UBIQUINONE] IRON-SULFUR PROTEIN 8, MITOCHONDRIAL"/>
    <property type="match status" value="1"/>
</dbReference>
<dbReference type="PANTHER" id="PTHR10849">
    <property type="entry name" value="NADH DEHYDROGENASE UBIQUINONE IRON-SULFUR PROTEIN 8, MITOCHONDRIAL"/>
    <property type="match status" value="1"/>
</dbReference>
<dbReference type="Pfam" id="PF12838">
    <property type="entry name" value="Fer4_7"/>
    <property type="match status" value="1"/>
</dbReference>
<dbReference type="SUPFAM" id="SSF54862">
    <property type="entry name" value="4Fe-4S ferredoxins"/>
    <property type="match status" value="1"/>
</dbReference>
<dbReference type="PROSITE" id="PS00198">
    <property type="entry name" value="4FE4S_FER_1"/>
    <property type="match status" value="2"/>
</dbReference>
<dbReference type="PROSITE" id="PS51379">
    <property type="entry name" value="4FE4S_FER_2"/>
    <property type="match status" value="2"/>
</dbReference>
<sequence length="182" mass="20610">MIKEIINVVHGTFTQLRSLVMIFGHAFRKRDTLQYPEEPVYLPPRYRGRIVLTRDPDGEERCVACNLCAVACPVGCISLQKAETEDGRWYPEFFRINFSRCIFCGLCEEACPTTAIQLTPDFEMGEFKRQDLVYEKHDLLISGPGKNPDYNYYRVAGMAIAGKPKGAAQNEAEPINVKSLLP</sequence>
<proteinExistence type="inferred from homology"/>
<comment type="function">
    <text evidence="1">NDH-1 shuttles electrons from NADH, via FMN and iron-sulfur (Fe-S) centers, to quinones in the respiratory chain. The immediate electron acceptor for the enzyme in this species is believed to be ubiquinone. Couples the redox reaction to proton translocation (for every two electrons transferred, four hydrogen ions are translocated across the cytoplasmic membrane), and thus conserves the redox energy in a proton gradient.</text>
</comment>
<comment type="catalytic activity">
    <reaction evidence="1">
        <text>a quinone + NADH + 5 H(+)(in) = a quinol + NAD(+) + 4 H(+)(out)</text>
        <dbReference type="Rhea" id="RHEA:57888"/>
        <dbReference type="ChEBI" id="CHEBI:15378"/>
        <dbReference type="ChEBI" id="CHEBI:24646"/>
        <dbReference type="ChEBI" id="CHEBI:57540"/>
        <dbReference type="ChEBI" id="CHEBI:57945"/>
        <dbReference type="ChEBI" id="CHEBI:132124"/>
    </reaction>
</comment>
<comment type="cofactor">
    <cofactor evidence="1">
        <name>[4Fe-4S] cluster</name>
        <dbReference type="ChEBI" id="CHEBI:49883"/>
    </cofactor>
    <text evidence="1">Binds 2 [4Fe-4S] clusters per subunit.</text>
</comment>
<comment type="subunit">
    <text evidence="1">NDH-1 is composed of 13 different subunits. Subunits NuoA, H, J, K, L, M, N constitute the membrane sector of the complex.</text>
</comment>
<comment type="subcellular location">
    <subcellularLocation>
        <location evidence="1">Cell inner membrane</location>
        <topology evidence="1">Peripheral membrane protein</topology>
    </subcellularLocation>
</comment>
<comment type="similarity">
    <text evidence="1">Belongs to the complex I 23 kDa subunit family.</text>
</comment>
<reference key="1">
    <citation type="journal article" date="2000" name="Nature">
        <title>Complete genome sequence of Pseudomonas aeruginosa PAO1, an opportunistic pathogen.</title>
        <authorList>
            <person name="Stover C.K."/>
            <person name="Pham X.-Q.T."/>
            <person name="Erwin A.L."/>
            <person name="Mizoguchi S.D."/>
            <person name="Warrener P."/>
            <person name="Hickey M.J."/>
            <person name="Brinkman F.S.L."/>
            <person name="Hufnagle W.O."/>
            <person name="Kowalik D.J."/>
            <person name="Lagrou M."/>
            <person name="Garber R.L."/>
            <person name="Goltry L."/>
            <person name="Tolentino E."/>
            <person name="Westbrock-Wadman S."/>
            <person name="Yuan Y."/>
            <person name="Brody L.L."/>
            <person name="Coulter S.N."/>
            <person name="Folger K.R."/>
            <person name="Kas A."/>
            <person name="Larbig K."/>
            <person name="Lim R.M."/>
            <person name="Smith K.A."/>
            <person name="Spencer D.H."/>
            <person name="Wong G.K.-S."/>
            <person name="Wu Z."/>
            <person name="Paulsen I.T."/>
            <person name="Reizer J."/>
            <person name="Saier M.H. Jr."/>
            <person name="Hancock R.E.W."/>
            <person name="Lory S."/>
            <person name="Olson M.V."/>
        </authorList>
    </citation>
    <scope>NUCLEOTIDE SEQUENCE [LARGE SCALE GENOMIC DNA]</scope>
    <source>
        <strain>ATCC 15692 / DSM 22644 / CIP 104116 / JCM 14847 / LMG 12228 / 1C / PRS 101 / PAO1</strain>
    </source>
</reference>
<evidence type="ECO:0000255" key="1">
    <source>
        <dbReference type="HAMAP-Rule" id="MF_01351"/>
    </source>
</evidence>
<name>NUOI_PSEAE</name>